<reference key="1">
    <citation type="journal article" date="2004" name="Nature">
        <title>Genome sequence of the Brown Norway rat yields insights into mammalian evolution.</title>
        <authorList>
            <person name="Gibbs R.A."/>
            <person name="Weinstock G.M."/>
            <person name="Metzker M.L."/>
            <person name="Muzny D.M."/>
            <person name="Sodergren E.J."/>
            <person name="Scherer S."/>
            <person name="Scott G."/>
            <person name="Steffen D."/>
            <person name="Worley K.C."/>
            <person name="Burch P.E."/>
            <person name="Okwuonu G."/>
            <person name="Hines S."/>
            <person name="Lewis L."/>
            <person name="Deramo C."/>
            <person name="Delgado O."/>
            <person name="Dugan-Rocha S."/>
            <person name="Miner G."/>
            <person name="Morgan M."/>
            <person name="Hawes A."/>
            <person name="Gill R."/>
            <person name="Holt R.A."/>
            <person name="Adams M.D."/>
            <person name="Amanatides P.G."/>
            <person name="Baden-Tillson H."/>
            <person name="Barnstead M."/>
            <person name="Chin S."/>
            <person name="Evans C.A."/>
            <person name="Ferriera S."/>
            <person name="Fosler C."/>
            <person name="Glodek A."/>
            <person name="Gu Z."/>
            <person name="Jennings D."/>
            <person name="Kraft C.L."/>
            <person name="Nguyen T."/>
            <person name="Pfannkoch C.M."/>
            <person name="Sitter C."/>
            <person name="Sutton G.G."/>
            <person name="Venter J.C."/>
            <person name="Woodage T."/>
            <person name="Smith D."/>
            <person name="Lee H.-M."/>
            <person name="Gustafson E."/>
            <person name="Cahill P."/>
            <person name="Kana A."/>
            <person name="Doucette-Stamm L."/>
            <person name="Weinstock K."/>
            <person name="Fechtel K."/>
            <person name="Weiss R.B."/>
            <person name="Dunn D.M."/>
            <person name="Green E.D."/>
            <person name="Blakesley R.W."/>
            <person name="Bouffard G.G."/>
            <person name="De Jong P.J."/>
            <person name="Osoegawa K."/>
            <person name="Zhu B."/>
            <person name="Marra M."/>
            <person name="Schein J."/>
            <person name="Bosdet I."/>
            <person name="Fjell C."/>
            <person name="Jones S."/>
            <person name="Krzywinski M."/>
            <person name="Mathewson C."/>
            <person name="Siddiqui A."/>
            <person name="Wye N."/>
            <person name="McPherson J."/>
            <person name="Zhao S."/>
            <person name="Fraser C.M."/>
            <person name="Shetty J."/>
            <person name="Shatsman S."/>
            <person name="Geer K."/>
            <person name="Chen Y."/>
            <person name="Abramzon S."/>
            <person name="Nierman W.C."/>
            <person name="Havlak P.H."/>
            <person name="Chen R."/>
            <person name="Durbin K.J."/>
            <person name="Egan A."/>
            <person name="Ren Y."/>
            <person name="Song X.-Z."/>
            <person name="Li B."/>
            <person name="Liu Y."/>
            <person name="Qin X."/>
            <person name="Cawley S."/>
            <person name="Cooney A.J."/>
            <person name="D'Souza L.M."/>
            <person name="Martin K."/>
            <person name="Wu J.Q."/>
            <person name="Gonzalez-Garay M.L."/>
            <person name="Jackson A.R."/>
            <person name="Kalafus K.J."/>
            <person name="McLeod M.P."/>
            <person name="Milosavljevic A."/>
            <person name="Virk D."/>
            <person name="Volkov A."/>
            <person name="Wheeler D.A."/>
            <person name="Zhang Z."/>
            <person name="Bailey J.A."/>
            <person name="Eichler E.E."/>
            <person name="Tuzun E."/>
            <person name="Birney E."/>
            <person name="Mongin E."/>
            <person name="Ureta-Vidal A."/>
            <person name="Woodwark C."/>
            <person name="Zdobnov E."/>
            <person name="Bork P."/>
            <person name="Suyama M."/>
            <person name="Torrents D."/>
            <person name="Alexandersson M."/>
            <person name="Trask B.J."/>
            <person name="Young J.M."/>
            <person name="Huang H."/>
            <person name="Wang H."/>
            <person name="Xing H."/>
            <person name="Daniels S."/>
            <person name="Gietzen D."/>
            <person name="Schmidt J."/>
            <person name="Stevens K."/>
            <person name="Vitt U."/>
            <person name="Wingrove J."/>
            <person name="Camara F."/>
            <person name="Mar Alba M."/>
            <person name="Abril J.F."/>
            <person name="Guigo R."/>
            <person name="Smit A."/>
            <person name="Dubchak I."/>
            <person name="Rubin E.M."/>
            <person name="Couronne O."/>
            <person name="Poliakov A."/>
            <person name="Huebner N."/>
            <person name="Ganten D."/>
            <person name="Goesele C."/>
            <person name="Hummel O."/>
            <person name="Kreitler T."/>
            <person name="Lee Y.-A."/>
            <person name="Monti J."/>
            <person name="Schulz H."/>
            <person name="Zimdahl H."/>
            <person name="Himmelbauer H."/>
            <person name="Lehrach H."/>
            <person name="Jacob H.J."/>
            <person name="Bromberg S."/>
            <person name="Gullings-Handley J."/>
            <person name="Jensen-Seaman M.I."/>
            <person name="Kwitek A.E."/>
            <person name="Lazar J."/>
            <person name="Pasko D."/>
            <person name="Tonellato P.J."/>
            <person name="Twigger S."/>
            <person name="Ponting C.P."/>
            <person name="Duarte J.M."/>
            <person name="Rice S."/>
            <person name="Goodstadt L."/>
            <person name="Beatson S.A."/>
            <person name="Emes R.D."/>
            <person name="Winter E.E."/>
            <person name="Webber C."/>
            <person name="Brandt P."/>
            <person name="Nyakatura G."/>
            <person name="Adetobi M."/>
            <person name="Chiaromonte F."/>
            <person name="Elnitski L."/>
            <person name="Eswara P."/>
            <person name="Hardison R.C."/>
            <person name="Hou M."/>
            <person name="Kolbe D."/>
            <person name="Makova K."/>
            <person name="Miller W."/>
            <person name="Nekrutenko A."/>
            <person name="Riemer C."/>
            <person name="Schwartz S."/>
            <person name="Taylor J."/>
            <person name="Yang S."/>
            <person name="Zhang Y."/>
            <person name="Lindpaintner K."/>
            <person name="Andrews T.D."/>
            <person name="Caccamo M."/>
            <person name="Clamp M."/>
            <person name="Clarke L."/>
            <person name="Curwen V."/>
            <person name="Durbin R.M."/>
            <person name="Eyras E."/>
            <person name="Searle S.M."/>
            <person name="Cooper G.M."/>
            <person name="Batzoglou S."/>
            <person name="Brudno M."/>
            <person name="Sidow A."/>
            <person name="Stone E.A."/>
            <person name="Payseur B.A."/>
            <person name="Bourque G."/>
            <person name="Lopez-Otin C."/>
            <person name="Puente X.S."/>
            <person name="Chakrabarti K."/>
            <person name="Chatterji S."/>
            <person name="Dewey C."/>
            <person name="Pachter L."/>
            <person name="Bray N."/>
            <person name="Yap V.B."/>
            <person name="Caspi A."/>
            <person name="Tesler G."/>
            <person name="Pevzner P.A."/>
            <person name="Haussler D."/>
            <person name="Roskin K.M."/>
            <person name="Baertsch R."/>
            <person name="Clawson H."/>
            <person name="Furey T.S."/>
            <person name="Hinrichs A.S."/>
            <person name="Karolchik D."/>
            <person name="Kent W.J."/>
            <person name="Rosenbloom K.R."/>
            <person name="Trumbower H."/>
            <person name="Weirauch M."/>
            <person name="Cooper D.N."/>
            <person name="Stenson P.D."/>
            <person name="Ma B."/>
            <person name="Brent M."/>
            <person name="Arumugam M."/>
            <person name="Shteynberg D."/>
            <person name="Copley R.R."/>
            <person name="Taylor M.S."/>
            <person name="Riethman H."/>
            <person name="Mudunuri U."/>
            <person name="Peterson J."/>
            <person name="Guyer M."/>
            <person name="Felsenfeld A."/>
            <person name="Old S."/>
            <person name="Mockrin S."/>
            <person name="Collins F.S."/>
        </authorList>
    </citation>
    <scope>NUCLEOTIDE SEQUENCE [LARGE SCALE GENOMIC DNA]</scope>
    <source>
        <strain>Brown Norway</strain>
    </source>
</reference>
<reference key="2">
    <citation type="journal article" date="1999" name="J. Biol. Chem.">
        <title>MIR is a novel ERM-like protein that interacts with myosin regulatory light chain and inhibits neurite outgrowth.</title>
        <authorList>
            <person name="Olsson P.-A."/>
            <person name="Korhonen L."/>
            <person name="Mercer E.A."/>
            <person name="Lindholm D."/>
        </authorList>
    </citation>
    <scope>TISSUE SPECIFICITY</scope>
</reference>
<reference key="3">
    <citation type="journal article" date="2000" name="Biochem. Biophys. Res. Commun.">
        <title>Neuronal expression of the ERM-like protein MIR in rat brain and its localization to human chromosome 6.</title>
        <authorList>
            <person name="Olsson P.A."/>
            <person name="Bornhauser B.C."/>
            <person name="Korhonen L."/>
            <person name="Lindholm D."/>
        </authorList>
    </citation>
    <scope>TISSUE SPECIFICITY</scope>
</reference>
<organism>
    <name type="scientific">Rattus norvegicus</name>
    <name type="common">Rat</name>
    <dbReference type="NCBI Taxonomy" id="10116"/>
    <lineage>
        <taxon>Eukaryota</taxon>
        <taxon>Metazoa</taxon>
        <taxon>Chordata</taxon>
        <taxon>Craniata</taxon>
        <taxon>Vertebrata</taxon>
        <taxon>Euteleostomi</taxon>
        <taxon>Mammalia</taxon>
        <taxon>Eutheria</taxon>
        <taxon>Euarchontoglires</taxon>
        <taxon>Glires</taxon>
        <taxon>Rodentia</taxon>
        <taxon>Myomorpha</taxon>
        <taxon>Muroidea</taxon>
        <taxon>Muridae</taxon>
        <taxon>Murinae</taxon>
        <taxon>Rattus</taxon>
    </lineage>
</organism>
<dbReference type="EC" id="2.3.2.27"/>
<dbReference type="RefSeq" id="NP_001100814.2">
    <property type="nucleotide sequence ID" value="NM_001107344.2"/>
</dbReference>
<dbReference type="BMRB" id="D3ZDI6"/>
<dbReference type="SMR" id="D3ZDI6"/>
<dbReference type="FunCoup" id="D3ZDI6">
    <property type="interactions" value="1220"/>
</dbReference>
<dbReference type="STRING" id="10116.ENSRNOP00000024021"/>
<dbReference type="PhosphoSitePlus" id="D3ZDI6"/>
<dbReference type="PaxDb" id="10116-ENSRNOP00000024021"/>
<dbReference type="Ensembl" id="ENSRNOT00000024021.7">
    <property type="protein sequence ID" value="ENSRNOP00000024021.4"/>
    <property type="gene ID" value="ENSRNOG00000017579.7"/>
</dbReference>
<dbReference type="GeneID" id="306825"/>
<dbReference type="KEGG" id="rno:306825"/>
<dbReference type="AGR" id="RGD:1305761"/>
<dbReference type="CTD" id="29116"/>
<dbReference type="RGD" id="1305761">
    <property type="gene designation" value="Mylip"/>
</dbReference>
<dbReference type="eggNOG" id="ENOG502QV76">
    <property type="taxonomic scope" value="Eukaryota"/>
</dbReference>
<dbReference type="GeneTree" id="ENSGT00940000156206"/>
<dbReference type="HOGENOM" id="CLU_031820_1_0_1"/>
<dbReference type="InParanoid" id="D3ZDI6"/>
<dbReference type="OMA" id="NKGENLW"/>
<dbReference type="OrthoDB" id="13317at9989"/>
<dbReference type="PhylomeDB" id="D3ZDI6"/>
<dbReference type="TreeFam" id="TF351936"/>
<dbReference type="Reactome" id="R-RNO-8866427">
    <property type="pathway name" value="VLDLR internalisation and degradation"/>
</dbReference>
<dbReference type="Reactome" id="R-RNO-983168">
    <property type="pathway name" value="Antigen processing: Ubiquitination &amp; Proteasome degradation"/>
</dbReference>
<dbReference type="UniPathway" id="UPA00143"/>
<dbReference type="PRO" id="PR:D3ZDI6"/>
<dbReference type="Proteomes" id="UP000002494">
    <property type="component" value="Chromosome 17"/>
</dbReference>
<dbReference type="Bgee" id="ENSRNOG00000017579">
    <property type="expression patterns" value="Expressed in thymus and 20 other cell types or tissues"/>
</dbReference>
<dbReference type="GO" id="GO:0005737">
    <property type="term" value="C:cytoplasm"/>
    <property type="evidence" value="ECO:0007669"/>
    <property type="project" value="UniProtKB-SubCell"/>
</dbReference>
<dbReference type="GO" id="GO:0005856">
    <property type="term" value="C:cytoskeleton"/>
    <property type="evidence" value="ECO:0007669"/>
    <property type="project" value="InterPro"/>
</dbReference>
<dbReference type="GO" id="GO:0005886">
    <property type="term" value="C:plasma membrane"/>
    <property type="evidence" value="ECO:0007669"/>
    <property type="project" value="UniProtKB-SubCell"/>
</dbReference>
<dbReference type="GO" id="GO:0008092">
    <property type="term" value="F:cytoskeletal protein binding"/>
    <property type="evidence" value="ECO:0000266"/>
    <property type="project" value="RGD"/>
</dbReference>
<dbReference type="GO" id="GO:0061630">
    <property type="term" value="F:ubiquitin protein ligase activity"/>
    <property type="evidence" value="ECO:0000266"/>
    <property type="project" value="RGD"/>
</dbReference>
<dbReference type="GO" id="GO:0004842">
    <property type="term" value="F:ubiquitin-protein transferase activity"/>
    <property type="evidence" value="ECO:0000266"/>
    <property type="project" value="RGD"/>
</dbReference>
<dbReference type="GO" id="GO:0008270">
    <property type="term" value="F:zinc ion binding"/>
    <property type="evidence" value="ECO:0007669"/>
    <property type="project" value="UniProtKB-KW"/>
</dbReference>
<dbReference type="GO" id="GO:0042632">
    <property type="term" value="P:cholesterol homeostasis"/>
    <property type="evidence" value="ECO:0000266"/>
    <property type="project" value="RGD"/>
</dbReference>
<dbReference type="GO" id="GO:0010989">
    <property type="term" value="P:negative regulation of low-density lipoprotein particle clearance"/>
    <property type="evidence" value="ECO:0000266"/>
    <property type="project" value="RGD"/>
</dbReference>
<dbReference type="GO" id="GO:0010977">
    <property type="term" value="P:negative regulation of neuron projection development"/>
    <property type="evidence" value="ECO:0000266"/>
    <property type="project" value="RGD"/>
</dbReference>
<dbReference type="GO" id="GO:0007399">
    <property type="term" value="P:nervous system development"/>
    <property type="evidence" value="ECO:0000266"/>
    <property type="project" value="RGD"/>
</dbReference>
<dbReference type="GO" id="GO:0045732">
    <property type="term" value="P:positive regulation of protein catabolic process"/>
    <property type="evidence" value="ECO:0000266"/>
    <property type="project" value="RGD"/>
</dbReference>
<dbReference type="GO" id="GO:0031648">
    <property type="term" value="P:protein destabilization"/>
    <property type="evidence" value="ECO:0000266"/>
    <property type="project" value="RGD"/>
</dbReference>
<dbReference type="GO" id="GO:0016567">
    <property type="term" value="P:protein ubiquitination"/>
    <property type="evidence" value="ECO:0000266"/>
    <property type="project" value="RGD"/>
</dbReference>
<dbReference type="GO" id="GO:0032803">
    <property type="term" value="P:regulation of low-density lipoprotein particle receptor catabolic process"/>
    <property type="evidence" value="ECO:0000266"/>
    <property type="project" value="RGD"/>
</dbReference>
<dbReference type="GO" id="GO:0006511">
    <property type="term" value="P:ubiquitin-dependent protein catabolic process"/>
    <property type="evidence" value="ECO:0000266"/>
    <property type="project" value="RGD"/>
</dbReference>
<dbReference type="CDD" id="cd14473">
    <property type="entry name" value="FERM_B-lobe"/>
    <property type="match status" value="1"/>
</dbReference>
<dbReference type="CDD" id="cd13195">
    <property type="entry name" value="FERM_C_MYLIP_IDOL"/>
    <property type="match status" value="1"/>
</dbReference>
<dbReference type="CDD" id="cd17104">
    <property type="entry name" value="FERM_F1_MYLIP"/>
    <property type="match status" value="1"/>
</dbReference>
<dbReference type="CDD" id="cd16523">
    <property type="entry name" value="RING-HC_MYLIP"/>
    <property type="match status" value="1"/>
</dbReference>
<dbReference type="FunFam" id="1.10.1170.10:FF:000002">
    <property type="entry name" value="Baculoviral IAP repeat containing 7"/>
    <property type="match status" value="1"/>
</dbReference>
<dbReference type="FunFam" id="1.20.80.10:FF:000019">
    <property type="entry name" value="E3 ubiquitin-protein ligase MYLIP"/>
    <property type="match status" value="1"/>
</dbReference>
<dbReference type="FunFam" id="3.10.20.90:FF:000129">
    <property type="entry name" value="E3 ubiquitin-protein ligase MYLIP isoform X1"/>
    <property type="match status" value="1"/>
</dbReference>
<dbReference type="FunFam" id="2.30.29.30:FF:000164">
    <property type="entry name" value="Putative E3 ubiquitin-protein ligase MYLIP"/>
    <property type="match status" value="1"/>
</dbReference>
<dbReference type="FunFam" id="3.30.40.10:FF:000175">
    <property type="entry name" value="Putative E3 ubiquitin-protein ligase MYLIP"/>
    <property type="match status" value="1"/>
</dbReference>
<dbReference type="Gene3D" id="1.20.80.10">
    <property type="match status" value="1"/>
</dbReference>
<dbReference type="Gene3D" id="3.10.20.90">
    <property type="entry name" value="Phosphatidylinositol 3-kinase Catalytic Subunit, Chain A, domain 1"/>
    <property type="match status" value="1"/>
</dbReference>
<dbReference type="Gene3D" id="2.30.29.30">
    <property type="entry name" value="Pleckstrin-homology domain (PH domain)/Phosphotyrosine-binding domain (PTB)"/>
    <property type="match status" value="1"/>
</dbReference>
<dbReference type="Gene3D" id="3.30.40.10">
    <property type="entry name" value="Zinc/RING finger domain, C3HC4 (zinc finger)"/>
    <property type="match status" value="1"/>
</dbReference>
<dbReference type="InterPro" id="IPR019749">
    <property type="entry name" value="Band_41_domain"/>
</dbReference>
<dbReference type="InterPro" id="IPR000798">
    <property type="entry name" value="Ez/rad/moesin-like"/>
</dbReference>
<dbReference type="InterPro" id="IPR014352">
    <property type="entry name" value="FERM/acyl-CoA-bd_prot_sf"/>
</dbReference>
<dbReference type="InterPro" id="IPR035963">
    <property type="entry name" value="FERM_2"/>
</dbReference>
<dbReference type="InterPro" id="IPR019748">
    <property type="entry name" value="FERM_central"/>
</dbReference>
<dbReference type="InterPro" id="IPR000299">
    <property type="entry name" value="FERM_domain"/>
</dbReference>
<dbReference type="InterPro" id="IPR018979">
    <property type="entry name" value="FERM_N"/>
</dbReference>
<dbReference type="InterPro" id="IPR018980">
    <property type="entry name" value="FERM_PH-like_C"/>
</dbReference>
<dbReference type="InterPro" id="IPR041790">
    <property type="entry name" value="MYLIP_FERM_C"/>
</dbReference>
<dbReference type="InterPro" id="IPR011993">
    <property type="entry name" value="PH-like_dom_sf"/>
</dbReference>
<dbReference type="InterPro" id="IPR029071">
    <property type="entry name" value="Ubiquitin-like_domsf"/>
</dbReference>
<dbReference type="InterPro" id="IPR001841">
    <property type="entry name" value="Znf_RING"/>
</dbReference>
<dbReference type="InterPro" id="IPR013083">
    <property type="entry name" value="Znf_RING/FYVE/PHD"/>
</dbReference>
<dbReference type="PANTHER" id="PTHR23280">
    <property type="entry name" value="4.1 G PROTEIN"/>
    <property type="match status" value="1"/>
</dbReference>
<dbReference type="PANTHER" id="PTHR23280:SF13">
    <property type="entry name" value="E3 UBIQUITIN-PROTEIN LIGASE MYLIP"/>
    <property type="match status" value="1"/>
</dbReference>
<dbReference type="Pfam" id="PF09380">
    <property type="entry name" value="FERM_C"/>
    <property type="match status" value="1"/>
</dbReference>
<dbReference type="Pfam" id="PF00373">
    <property type="entry name" value="FERM_M"/>
    <property type="match status" value="1"/>
</dbReference>
<dbReference type="Pfam" id="PF09379">
    <property type="entry name" value="FERM_N"/>
    <property type="match status" value="1"/>
</dbReference>
<dbReference type="Pfam" id="PF13920">
    <property type="entry name" value="zf-C3HC4_3"/>
    <property type="match status" value="1"/>
</dbReference>
<dbReference type="PRINTS" id="PR00935">
    <property type="entry name" value="BAND41"/>
</dbReference>
<dbReference type="PRINTS" id="PR00661">
    <property type="entry name" value="ERMFAMILY"/>
</dbReference>
<dbReference type="SMART" id="SM00295">
    <property type="entry name" value="B41"/>
    <property type="match status" value="1"/>
</dbReference>
<dbReference type="SMART" id="SM01196">
    <property type="entry name" value="FERM_C"/>
    <property type="match status" value="1"/>
</dbReference>
<dbReference type="SUPFAM" id="SSF50729">
    <property type="entry name" value="PH domain-like"/>
    <property type="match status" value="1"/>
</dbReference>
<dbReference type="SUPFAM" id="SSF57850">
    <property type="entry name" value="RING/U-box"/>
    <property type="match status" value="1"/>
</dbReference>
<dbReference type="SUPFAM" id="SSF47031">
    <property type="entry name" value="Second domain of FERM"/>
    <property type="match status" value="1"/>
</dbReference>
<dbReference type="SUPFAM" id="SSF54236">
    <property type="entry name" value="Ubiquitin-like"/>
    <property type="match status" value="1"/>
</dbReference>
<dbReference type="PROSITE" id="PS50057">
    <property type="entry name" value="FERM_3"/>
    <property type="match status" value="1"/>
</dbReference>
<dbReference type="PROSITE" id="PS50089">
    <property type="entry name" value="ZF_RING_2"/>
    <property type="match status" value="1"/>
</dbReference>
<evidence type="ECO:0000250" key="1"/>
<evidence type="ECO:0000250" key="2">
    <source>
        <dbReference type="UniProtKB" id="Q8BM54"/>
    </source>
</evidence>
<evidence type="ECO:0000250" key="3">
    <source>
        <dbReference type="UniProtKB" id="Q8WY64"/>
    </source>
</evidence>
<evidence type="ECO:0000255" key="4">
    <source>
        <dbReference type="PROSITE-ProRule" id="PRU00084"/>
    </source>
</evidence>
<evidence type="ECO:0000255" key="5">
    <source>
        <dbReference type="PROSITE-ProRule" id="PRU00175"/>
    </source>
</evidence>
<evidence type="ECO:0000256" key="6">
    <source>
        <dbReference type="SAM" id="MobiDB-lite"/>
    </source>
</evidence>
<evidence type="ECO:0000269" key="7">
    <source>
    </source>
</evidence>
<evidence type="ECO:0000269" key="8">
    <source>
    </source>
</evidence>
<evidence type="ECO:0000305" key="9"/>
<sequence>MLCYVTRPDAVLMEVEVEAKANGEDCLNQVCRRLGIIEVDYFGLQFTGSKGESLWLNLRNRISQQMDGLAPYRLKLRVKFFVEPHLILQEQTRHIFFLHIKESLLAGHLQCSPEQAVELSALLAQTKFGDYNQNTAQYSYEDLCEKELSSSTLNSIVGKHKELEGISQASAEYQVLQIVSAMENYGIEWHAVRDSEGQKLLIGVGPEGISICKEDFSPINRIAYPVVQMATQSGKNVYLTVTKESGNSIVLLFKMISTRAASGLYRAITETHAFYRCDTVTSAVMMQYSRDLKGHLASLFLNENINLGKKYVFDIKRTSKEVYDHARRALYNAGVVDLVSRNDQSPPSSPLKSSDSSMSCSSCEGLSCQQTRVLQEKLRKLKEAMLCMVCCEEEINSTFCPCGHTVCCESCAAQLQSCPVCRSRVEHVQHVYLPTHTSLLNLTVI</sequence>
<proteinExistence type="evidence at transcript level"/>
<comment type="function">
    <text evidence="2">E3 ubiquitin-protein ligase that mediates ubiquitination and subsequent proteasomal degradation of myosin regulatory light chain (MRLC), LDLR, VLDLR and LRP8. Activity depends on E2 enzymes of the UBE2D family. Proteasomal degradation of MRLC leads to inhibit neurite outgrowth in presence of NGF by counteracting the stabilization of MRLC by saposin-like protein (CNPY2/MSAP) and reducing CNPY2-stimulated neurite outgrowth. Acts as a sterol-dependent inhibitor of cellular cholesterol uptake by mediating ubiquitination and subsequent degradation of LDLR.</text>
</comment>
<comment type="catalytic activity">
    <reaction>
        <text>S-ubiquitinyl-[E2 ubiquitin-conjugating enzyme]-L-cysteine + [acceptor protein]-L-lysine = [E2 ubiquitin-conjugating enzyme]-L-cysteine + N(6)-ubiquitinyl-[acceptor protein]-L-lysine.</text>
        <dbReference type="EC" id="2.3.2.27"/>
    </reaction>
</comment>
<comment type="activity regulation">
    <text evidence="3">Can bind 1 iron ion per dimer. Iron binding seems to decrease LDLR degradation activity.</text>
</comment>
<comment type="pathway">
    <text>Protein modification; protein ubiquitination.</text>
</comment>
<comment type="subunit">
    <text evidence="3">Homodimer. Interacts with the E2 ubiquitin-conjugating enzyme, UBE2D1 (via RING-type zinc finger). Interacts with myosin regulatory light chain (MRLC) and TMEM4.</text>
</comment>
<comment type="subcellular location">
    <subcellularLocation>
        <location evidence="3">Cytoplasm</location>
    </subcellularLocation>
    <subcellularLocation>
        <location evidence="3">Cell membrane</location>
        <topology>Peripheral membrane protein</topology>
    </subcellularLocation>
</comment>
<comment type="tissue specificity">
    <text evidence="7 8">Expressed in developing and adult brain, hippocampus, cerebellum, cerebral cortex, thalamus and substantia nigra. Predominantly found in neurons.</text>
</comment>
<comment type="domain">
    <text>The RING domain mediates ubiquitination and the neurite outgrowth inhibitory activity.</text>
</comment>
<comment type="domain">
    <text evidence="1">The FERM domain binds phospholipids and mediates lipoprotein receptors recognition at the plasma membrane through their cytoplasmic tails.</text>
</comment>
<comment type="domain">
    <text evidence="1">The RING-type zinc finger mediates the interaction with UBE2D E2 enzymes.</text>
</comment>
<comment type="PTM">
    <text evidence="1">Autoubiquitinated.</text>
</comment>
<keyword id="KW-1003">Cell membrane</keyword>
<keyword id="KW-0963">Cytoplasm</keyword>
<keyword id="KW-0408">Iron</keyword>
<keyword id="KW-0472">Membrane</keyword>
<keyword id="KW-0479">Metal-binding</keyword>
<keyword id="KW-1185">Reference proteome</keyword>
<keyword id="KW-0808">Transferase</keyword>
<keyword id="KW-0832">Ubl conjugation</keyword>
<keyword id="KW-0833">Ubl conjugation pathway</keyword>
<keyword id="KW-0862">Zinc</keyword>
<keyword id="KW-0863">Zinc-finger</keyword>
<protein>
    <recommendedName>
        <fullName>E3 ubiquitin-protein ligase MYLIP</fullName>
        <ecNumber>2.3.2.27</ecNumber>
    </recommendedName>
    <alternativeName>
        <fullName>Inducible degrader of the LDL-receptor</fullName>
        <shortName>Idol</shortName>
    </alternativeName>
    <alternativeName>
        <fullName>Myosin regulatory light chain interacting protein</fullName>
        <shortName>MIR</shortName>
    </alternativeName>
    <alternativeName>
        <fullName evidence="9">RING-type E3 ubiquitin transferase MYLIP</fullName>
    </alternativeName>
</protein>
<accession>D3ZDI6</accession>
<feature type="chain" id="PRO_0000397121" description="E3 ubiquitin-protein ligase MYLIP">
    <location>
        <begin position="1"/>
        <end position="445"/>
    </location>
</feature>
<feature type="domain" description="FERM" evidence="4">
    <location>
        <begin position="1"/>
        <end position="279"/>
    </location>
</feature>
<feature type="zinc finger region" description="RING-type" evidence="5">
    <location>
        <begin position="387"/>
        <end position="422"/>
    </location>
</feature>
<feature type="region of interest" description="Disordered" evidence="6">
    <location>
        <begin position="341"/>
        <end position="363"/>
    </location>
</feature>
<feature type="region of interest" description="Critical for homodimerization" evidence="1">
    <location>
        <begin position="431"/>
        <end position="433"/>
    </location>
</feature>
<feature type="compositionally biased region" description="Low complexity" evidence="6">
    <location>
        <begin position="350"/>
        <end position="363"/>
    </location>
</feature>
<feature type="binding site" evidence="1">
    <location>
        <position position="360"/>
    </location>
    <ligand>
        <name>Fe cation</name>
        <dbReference type="ChEBI" id="CHEBI:24875"/>
    </ligand>
</feature>
<feature type="binding site" evidence="1">
    <location>
        <position position="363"/>
    </location>
    <ligand>
        <name>Fe cation</name>
        <dbReference type="ChEBI" id="CHEBI:24875"/>
    </ligand>
</feature>
<feature type="binding site" evidence="1">
    <location>
        <position position="368"/>
    </location>
    <ligand>
        <name>Fe cation</name>
        <dbReference type="ChEBI" id="CHEBI:24875"/>
    </ligand>
</feature>
<gene>
    <name type="primary">Mylip</name>
</gene>
<name>MYLIP_RAT</name>